<evidence type="ECO:0000255" key="1">
    <source>
        <dbReference type="HAMAP-Rule" id="MF_00753"/>
    </source>
</evidence>
<evidence type="ECO:0000305" key="2"/>
<accession>Q8ZAH6</accession>
<accession>Q0WAI5</accession>
<accession>Q8CWI2</accession>
<organism>
    <name type="scientific">Yersinia pestis</name>
    <dbReference type="NCBI Taxonomy" id="632"/>
    <lineage>
        <taxon>Bacteria</taxon>
        <taxon>Pseudomonadati</taxon>
        <taxon>Pseudomonadota</taxon>
        <taxon>Gammaproteobacteria</taxon>
        <taxon>Enterobacterales</taxon>
        <taxon>Yersiniaceae</taxon>
        <taxon>Yersinia</taxon>
    </lineage>
</organism>
<comment type="function">
    <text evidence="1">Conversion of glycerol 3-phosphate to dihydroxyacetone. Uses fumarate or nitrate as electron acceptor.</text>
</comment>
<comment type="catalytic activity">
    <reaction evidence="1">
        <text>a quinone + sn-glycerol 3-phosphate = dihydroxyacetone phosphate + a quinol</text>
        <dbReference type="Rhea" id="RHEA:18977"/>
        <dbReference type="ChEBI" id="CHEBI:24646"/>
        <dbReference type="ChEBI" id="CHEBI:57597"/>
        <dbReference type="ChEBI" id="CHEBI:57642"/>
        <dbReference type="ChEBI" id="CHEBI:132124"/>
        <dbReference type="EC" id="1.1.5.3"/>
    </reaction>
</comment>
<comment type="cofactor">
    <cofactor evidence="1">
        <name>FMN</name>
        <dbReference type="ChEBI" id="CHEBI:58210"/>
    </cofactor>
</comment>
<comment type="pathway">
    <text evidence="1">Polyol metabolism; glycerol degradation via glycerol kinase pathway; glycerone phosphate from sn-glycerol 3-phosphate (anaerobic route): step 1/1.</text>
</comment>
<comment type="subunit">
    <text evidence="1">Composed of a catalytic GlpA/B dimer and of membrane bound GlpC.</text>
</comment>
<comment type="similarity">
    <text evidence="1">Belongs to the anaerobic G-3-P dehydrogenase subunit B family.</text>
</comment>
<comment type="sequence caution" evidence="2">
    <conflict type="erroneous initiation">
        <sequence resource="EMBL-CDS" id="AAM83994"/>
    </conflict>
</comment>
<comment type="sequence caution" evidence="2">
    <conflict type="erroneous initiation">
        <sequence resource="EMBL-CDS" id="AAS63391"/>
    </conflict>
</comment>
<name>GLPB_YERPE</name>
<dbReference type="EC" id="1.1.5.3" evidence="1"/>
<dbReference type="EMBL" id="AL590842">
    <property type="protein sequence ID" value="CAL22412.1"/>
    <property type="molecule type" value="Genomic_DNA"/>
</dbReference>
<dbReference type="EMBL" id="AE009952">
    <property type="protein sequence ID" value="AAM83994.1"/>
    <property type="status" value="ALT_INIT"/>
    <property type="molecule type" value="Genomic_DNA"/>
</dbReference>
<dbReference type="EMBL" id="AE017042">
    <property type="protein sequence ID" value="AAS63391.1"/>
    <property type="status" value="ALT_INIT"/>
    <property type="molecule type" value="Genomic_DNA"/>
</dbReference>
<dbReference type="PIR" id="AI0465">
    <property type="entry name" value="AI0465"/>
</dbReference>
<dbReference type="RefSeq" id="WP_002211492.1">
    <property type="nucleotide sequence ID" value="NZ_WUCM01000033.1"/>
</dbReference>
<dbReference type="RefSeq" id="YP_002348703.1">
    <property type="nucleotide sequence ID" value="NC_003143.1"/>
</dbReference>
<dbReference type="STRING" id="214092.YPO3825"/>
<dbReference type="PaxDb" id="214092-YPO3825"/>
<dbReference type="DNASU" id="1145352"/>
<dbReference type="EnsemblBacteria" id="AAS63391">
    <property type="protein sequence ID" value="AAS63391"/>
    <property type="gene ID" value="YP_3223"/>
</dbReference>
<dbReference type="GeneID" id="57974883"/>
<dbReference type="KEGG" id="ype:YPO3825"/>
<dbReference type="KEGG" id="ypk:y0405"/>
<dbReference type="KEGG" id="ypm:YP_3223"/>
<dbReference type="PATRIC" id="fig|214092.21.peg.4346"/>
<dbReference type="eggNOG" id="COG3075">
    <property type="taxonomic scope" value="Bacteria"/>
</dbReference>
<dbReference type="HOGENOM" id="CLU_047793_0_0_6"/>
<dbReference type="OMA" id="CFGLENQ"/>
<dbReference type="OrthoDB" id="6395323at2"/>
<dbReference type="UniPathway" id="UPA00618">
    <property type="reaction ID" value="UER00673"/>
</dbReference>
<dbReference type="Proteomes" id="UP000000815">
    <property type="component" value="Chromosome"/>
</dbReference>
<dbReference type="Proteomes" id="UP000001019">
    <property type="component" value="Chromosome"/>
</dbReference>
<dbReference type="Proteomes" id="UP000002490">
    <property type="component" value="Chromosome"/>
</dbReference>
<dbReference type="GO" id="GO:0009331">
    <property type="term" value="C:glycerol-3-phosphate dehydrogenase (FAD) complex"/>
    <property type="evidence" value="ECO:0007669"/>
    <property type="project" value="InterPro"/>
</dbReference>
<dbReference type="GO" id="GO:0004368">
    <property type="term" value="F:glycerol-3-phosphate dehydrogenase (quinone) activity"/>
    <property type="evidence" value="ECO:0007669"/>
    <property type="project" value="UniProtKB-UniRule"/>
</dbReference>
<dbReference type="GO" id="GO:0019563">
    <property type="term" value="P:glycerol catabolic process"/>
    <property type="evidence" value="ECO:0007669"/>
    <property type="project" value="UniProtKB-UniRule"/>
</dbReference>
<dbReference type="Gene3D" id="3.50.50.60">
    <property type="entry name" value="FAD/NAD(P)-binding domain"/>
    <property type="match status" value="1"/>
</dbReference>
<dbReference type="HAMAP" id="MF_00753">
    <property type="entry name" value="Glycerol3P_GlpB"/>
    <property type="match status" value="1"/>
</dbReference>
<dbReference type="InterPro" id="IPR003953">
    <property type="entry name" value="FAD-dep_OxRdtase_2_FAD-bd"/>
</dbReference>
<dbReference type="InterPro" id="IPR036188">
    <property type="entry name" value="FAD/NAD-bd_sf"/>
</dbReference>
<dbReference type="InterPro" id="IPR009158">
    <property type="entry name" value="G3P_DH_GlpB_su"/>
</dbReference>
<dbReference type="NCBIfam" id="TIGR03378">
    <property type="entry name" value="glycerol3P_GlpB"/>
    <property type="match status" value="1"/>
</dbReference>
<dbReference type="NCBIfam" id="NF003718">
    <property type="entry name" value="PRK05329.1-1"/>
    <property type="match status" value="1"/>
</dbReference>
<dbReference type="NCBIfam" id="NF003719">
    <property type="entry name" value="PRK05329.1-2"/>
    <property type="match status" value="1"/>
</dbReference>
<dbReference type="NCBIfam" id="NF003720">
    <property type="entry name" value="PRK05329.1-3"/>
    <property type="match status" value="1"/>
</dbReference>
<dbReference type="NCBIfam" id="NF003721">
    <property type="entry name" value="PRK05329.1-4"/>
    <property type="match status" value="1"/>
</dbReference>
<dbReference type="PANTHER" id="PTHR43734:SF7">
    <property type="entry name" value="4,4'-DIAPONEUROSPORENE OXYGENASE"/>
    <property type="match status" value="1"/>
</dbReference>
<dbReference type="PANTHER" id="PTHR43734">
    <property type="entry name" value="PHYTOENE DESATURASE"/>
    <property type="match status" value="1"/>
</dbReference>
<dbReference type="Pfam" id="PF00890">
    <property type="entry name" value="FAD_binding_2"/>
    <property type="match status" value="1"/>
</dbReference>
<dbReference type="PIRSF" id="PIRSF000141">
    <property type="entry name" value="Anaerobic_G3P_dh"/>
    <property type="match status" value="1"/>
</dbReference>
<dbReference type="SUPFAM" id="SSF51905">
    <property type="entry name" value="FAD/NAD(P)-binding domain"/>
    <property type="match status" value="1"/>
</dbReference>
<protein>
    <recommendedName>
        <fullName evidence="1">Anaerobic glycerol-3-phosphate dehydrogenase subunit B</fullName>
        <shortName evidence="1">Anaerobic G-3-P dehydrogenase subunit B</shortName>
        <shortName evidence="1">Anaerobic G3Pdhase B</shortName>
        <ecNumber evidence="1">1.1.5.3</ecNumber>
    </recommendedName>
</protein>
<sequence length="424" mass="45506">MKFDVIIIGGGLAGLACGIRLAEQGKYCAIVSSGQNALHFSSGSLDLLAKLPDGQAVSQPLSALSALAELAPEHPYSKMRNITQLDELVQEAEALLRRCGLDIVGSSAENHLRLTPLGSCRPTWLSLADIPVAPLNGPLPWQRVAVIGIEGFLDFQPQMVASALQDQGIDATADYLHLPALDRLRDNPSEFRAVNIARILDLPENRQPLADELSRLSSTAEMILLPACIGLDKSAPLDALRAVVGKPIQLLPTLPPSLLGMRLHQALRHRFQQLGGLVMPGDAVLRAELVDNRITGLYSRNHGDIPLRAAQMVLASGSFFSNGLVATFDKIYEPILDLDILSLPHRADWSHSNLFAPQPYLQFGVNTDNHLRPLRGGVALENLHAIGAVLGGYDPLQQGCGAGVSLTSAVFVAEQIISEMAVTL</sequence>
<keyword id="KW-0285">Flavoprotein</keyword>
<keyword id="KW-0288">FMN</keyword>
<keyword id="KW-0560">Oxidoreductase</keyword>
<keyword id="KW-1185">Reference proteome</keyword>
<gene>
    <name evidence="1" type="primary">glpB</name>
    <name type="ordered locus">YPO3825</name>
    <name type="ordered locus">y0405</name>
    <name type="ordered locus">YP_3223</name>
</gene>
<proteinExistence type="inferred from homology"/>
<feature type="chain" id="PRO_0000204571" description="Anaerobic glycerol-3-phosphate dehydrogenase subunit B">
    <location>
        <begin position="1"/>
        <end position="424"/>
    </location>
</feature>
<reference key="1">
    <citation type="journal article" date="2001" name="Nature">
        <title>Genome sequence of Yersinia pestis, the causative agent of plague.</title>
        <authorList>
            <person name="Parkhill J."/>
            <person name="Wren B.W."/>
            <person name="Thomson N.R."/>
            <person name="Titball R.W."/>
            <person name="Holden M.T.G."/>
            <person name="Prentice M.B."/>
            <person name="Sebaihia M."/>
            <person name="James K.D."/>
            <person name="Churcher C.M."/>
            <person name="Mungall K.L."/>
            <person name="Baker S."/>
            <person name="Basham D."/>
            <person name="Bentley S.D."/>
            <person name="Brooks K."/>
            <person name="Cerdeno-Tarraga A.-M."/>
            <person name="Chillingworth T."/>
            <person name="Cronin A."/>
            <person name="Davies R.M."/>
            <person name="Davis P."/>
            <person name="Dougan G."/>
            <person name="Feltwell T."/>
            <person name="Hamlin N."/>
            <person name="Holroyd S."/>
            <person name="Jagels K."/>
            <person name="Karlyshev A.V."/>
            <person name="Leather S."/>
            <person name="Moule S."/>
            <person name="Oyston P.C.F."/>
            <person name="Quail M.A."/>
            <person name="Rutherford K.M."/>
            <person name="Simmonds M."/>
            <person name="Skelton J."/>
            <person name="Stevens K."/>
            <person name="Whitehead S."/>
            <person name="Barrell B.G."/>
        </authorList>
    </citation>
    <scope>NUCLEOTIDE SEQUENCE [LARGE SCALE GENOMIC DNA]</scope>
    <source>
        <strain>CO-92 / Biovar Orientalis</strain>
    </source>
</reference>
<reference key="2">
    <citation type="journal article" date="2002" name="J. Bacteriol.">
        <title>Genome sequence of Yersinia pestis KIM.</title>
        <authorList>
            <person name="Deng W."/>
            <person name="Burland V."/>
            <person name="Plunkett G. III"/>
            <person name="Boutin A."/>
            <person name="Mayhew G.F."/>
            <person name="Liss P."/>
            <person name="Perna N.T."/>
            <person name="Rose D.J."/>
            <person name="Mau B."/>
            <person name="Zhou S."/>
            <person name="Schwartz D.C."/>
            <person name="Fetherston J.D."/>
            <person name="Lindler L.E."/>
            <person name="Brubaker R.R."/>
            <person name="Plano G.V."/>
            <person name="Straley S.C."/>
            <person name="McDonough K.A."/>
            <person name="Nilles M.L."/>
            <person name="Matson J.S."/>
            <person name="Blattner F.R."/>
            <person name="Perry R.D."/>
        </authorList>
    </citation>
    <scope>NUCLEOTIDE SEQUENCE [LARGE SCALE GENOMIC DNA]</scope>
    <source>
        <strain>KIM10+ / Biovar Mediaevalis</strain>
    </source>
</reference>
<reference key="3">
    <citation type="journal article" date="2004" name="DNA Res.">
        <title>Complete genome sequence of Yersinia pestis strain 91001, an isolate avirulent to humans.</title>
        <authorList>
            <person name="Song Y."/>
            <person name="Tong Z."/>
            <person name="Wang J."/>
            <person name="Wang L."/>
            <person name="Guo Z."/>
            <person name="Han Y."/>
            <person name="Zhang J."/>
            <person name="Pei D."/>
            <person name="Zhou D."/>
            <person name="Qin H."/>
            <person name="Pang X."/>
            <person name="Han Y."/>
            <person name="Zhai J."/>
            <person name="Li M."/>
            <person name="Cui B."/>
            <person name="Qi Z."/>
            <person name="Jin L."/>
            <person name="Dai R."/>
            <person name="Chen F."/>
            <person name="Li S."/>
            <person name="Ye C."/>
            <person name="Du Z."/>
            <person name="Lin W."/>
            <person name="Wang J."/>
            <person name="Yu J."/>
            <person name="Yang H."/>
            <person name="Wang J."/>
            <person name="Huang P."/>
            <person name="Yang R."/>
        </authorList>
    </citation>
    <scope>NUCLEOTIDE SEQUENCE [LARGE SCALE GENOMIC DNA]</scope>
    <source>
        <strain>91001 / Biovar Mediaevalis</strain>
    </source>
</reference>